<reference key="1">
    <citation type="journal article" date="2000" name="Nature">
        <title>The genome sequence of the plant pathogen Xylella fastidiosa.</title>
        <authorList>
            <person name="Simpson A.J.G."/>
            <person name="Reinach F.C."/>
            <person name="Arruda P."/>
            <person name="Abreu F.A."/>
            <person name="Acencio M."/>
            <person name="Alvarenga R."/>
            <person name="Alves L.M.C."/>
            <person name="Araya J.E."/>
            <person name="Baia G.S."/>
            <person name="Baptista C.S."/>
            <person name="Barros M.H."/>
            <person name="Bonaccorsi E.D."/>
            <person name="Bordin S."/>
            <person name="Bove J.M."/>
            <person name="Briones M.R.S."/>
            <person name="Bueno M.R.P."/>
            <person name="Camargo A.A."/>
            <person name="Camargo L.E.A."/>
            <person name="Carraro D.M."/>
            <person name="Carrer H."/>
            <person name="Colauto N.B."/>
            <person name="Colombo C."/>
            <person name="Costa F.F."/>
            <person name="Costa M.C.R."/>
            <person name="Costa-Neto C.M."/>
            <person name="Coutinho L.L."/>
            <person name="Cristofani M."/>
            <person name="Dias-Neto E."/>
            <person name="Docena C."/>
            <person name="El-Dorry H."/>
            <person name="Facincani A.P."/>
            <person name="Ferreira A.J.S."/>
            <person name="Ferreira V.C.A."/>
            <person name="Ferro J.A."/>
            <person name="Fraga J.S."/>
            <person name="Franca S.C."/>
            <person name="Franco M.C."/>
            <person name="Frohme M."/>
            <person name="Furlan L.R."/>
            <person name="Garnier M."/>
            <person name="Goldman G.H."/>
            <person name="Goldman M.H.S."/>
            <person name="Gomes S.L."/>
            <person name="Gruber A."/>
            <person name="Ho P.L."/>
            <person name="Hoheisel J.D."/>
            <person name="Junqueira M.L."/>
            <person name="Kemper E.L."/>
            <person name="Kitajima J.P."/>
            <person name="Krieger J.E."/>
            <person name="Kuramae E.E."/>
            <person name="Laigret F."/>
            <person name="Lambais M.R."/>
            <person name="Leite L.C.C."/>
            <person name="Lemos E.G.M."/>
            <person name="Lemos M.V.F."/>
            <person name="Lopes S.A."/>
            <person name="Lopes C.R."/>
            <person name="Machado J.A."/>
            <person name="Machado M.A."/>
            <person name="Madeira A.M.B.N."/>
            <person name="Madeira H.M.F."/>
            <person name="Marino C.L."/>
            <person name="Marques M.V."/>
            <person name="Martins E.A.L."/>
            <person name="Martins E.M.F."/>
            <person name="Matsukuma A.Y."/>
            <person name="Menck C.F.M."/>
            <person name="Miracca E.C."/>
            <person name="Miyaki C.Y."/>
            <person name="Monteiro-Vitorello C.B."/>
            <person name="Moon D.H."/>
            <person name="Nagai M.A."/>
            <person name="Nascimento A.L.T.O."/>
            <person name="Netto L.E.S."/>
            <person name="Nhani A. Jr."/>
            <person name="Nobrega F.G."/>
            <person name="Nunes L.R."/>
            <person name="Oliveira M.A."/>
            <person name="de Oliveira M.C."/>
            <person name="de Oliveira R.C."/>
            <person name="Palmieri D.A."/>
            <person name="Paris A."/>
            <person name="Peixoto B.R."/>
            <person name="Pereira G.A.G."/>
            <person name="Pereira H.A. Jr."/>
            <person name="Pesquero J.B."/>
            <person name="Quaggio R.B."/>
            <person name="Roberto P.G."/>
            <person name="Rodrigues V."/>
            <person name="de Rosa A.J.M."/>
            <person name="de Rosa V.E. Jr."/>
            <person name="de Sa R.G."/>
            <person name="Santelli R.V."/>
            <person name="Sawasaki H.E."/>
            <person name="da Silva A.C.R."/>
            <person name="da Silva A.M."/>
            <person name="da Silva F.R."/>
            <person name="Silva W.A. Jr."/>
            <person name="da Silveira J.F."/>
            <person name="Silvestri M.L.Z."/>
            <person name="Siqueira W.J."/>
            <person name="de Souza A.A."/>
            <person name="de Souza A.P."/>
            <person name="Terenzi M.F."/>
            <person name="Truffi D."/>
            <person name="Tsai S.M."/>
            <person name="Tsuhako M.H."/>
            <person name="Vallada H."/>
            <person name="Van Sluys M.A."/>
            <person name="Verjovski-Almeida S."/>
            <person name="Vettore A.L."/>
            <person name="Zago M.A."/>
            <person name="Zatz M."/>
            <person name="Meidanis J."/>
            <person name="Setubal J.C."/>
        </authorList>
    </citation>
    <scope>NUCLEOTIDE SEQUENCE [LARGE SCALE GENOMIC DNA]</scope>
    <source>
        <strain>9a5c</strain>
    </source>
</reference>
<dbReference type="EC" id="6.3.5.2"/>
<dbReference type="EMBL" id="AE003849">
    <property type="protein sequence ID" value="AAF85228.1"/>
    <property type="molecule type" value="Genomic_DNA"/>
</dbReference>
<dbReference type="PIR" id="A82558">
    <property type="entry name" value="A82558"/>
</dbReference>
<dbReference type="RefSeq" id="WP_010894874.1">
    <property type="nucleotide sequence ID" value="NC_002488.3"/>
</dbReference>
<dbReference type="SMR" id="Q9PAR6"/>
<dbReference type="STRING" id="160492.XF_2429"/>
<dbReference type="MEROPS" id="C26.957"/>
<dbReference type="KEGG" id="xfa:XF_2429"/>
<dbReference type="eggNOG" id="COG0518">
    <property type="taxonomic scope" value="Bacteria"/>
</dbReference>
<dbReference type="eggNOG" id="COG0519">
    <property type="taxonomic scope" value="Bacteria"/>
</dbReference>
<dbReference type="HOGENOM" id="CLU_014340_0_5_6"/>
<dbReference type="UniPathway" id="UPA00189">
    <property type="reaction ID" value="UER00296"/>
</dbReference>
<dbReference type="Proteomes" id="UP000000812">
    <property type="component" value="Chromosome"/>
</dbReference>
<dbReference type="GO" id="GO:0005829">
    <property type="term" value="C:cytosol"/>
    <property type="evidence" value="ECO:0007669"/>
    <property type="project" value="TreeGrafter"/>
</dbReference>
<dbReference type="GO" id="GO:0005524">
    <property type="term" value="F:ATP binding"/>
    <property type="evidence" value="ECO:0007669"/>
    <property type="project" value="UniProtKB-UniRule"/>
</dbReference>
<dbReference type="GO" id="GO:0003921">
    <property type="term" value="F:GMP synthase activity"/>
    <property type="evidence" value="ECO:0007669"/>
    <property type="project" value="InterPro"/>
</dbReference>
<dbReference type="CDD" id="cd01742">
    <property type="entry name" value="GATase1_GMP_Synthase"/>
    <property type="match status" value="1"/>
</dbReference>
<dbReference type="CDD" id="cd01997">
    <property type="entry name" value="GMP_synthase_C"/>
    <property type="match status" value="1"/>
</dbReference>
<dbReference type="FunFam" id="3.30.300.10:FF:000002">
    <property type="entry name" value="GMP synthase [glutamine-hydrolyzing]"/>
    <property type="match status" value="1"/>
</dbReference>
<dbReference type="FunFam" id="3.40.50.620:FF:000001">
    <property type="entry name" value="GMP synthase [glutamine-hydrolyzing]"/>
    <property type="match status" value="1"/>
</dbReference>
<dbReference type="FunFam" id="3.40.50.880:FF:000001">
    <property type="entry name" value="GMP synthase [glutamine-hydrolyzing]"/>
    <property type="match status" value="1"/>
</dbReference>
<dbReference type="Gene3D" id="3.30.300.10">
    <property type="match status" value="1"/>
</dbReference>
<dbReference type="Gene3D" id="3.40.50.880">
    <property type="match status" value="1"/>
</dbReference>
<dbReference type="Gene3D" id="3.40.50.620">
    <property type="entry name" value="HUPs"/>
    <property type="match status" value="1"/>
</dbReference>
<dbReference type="HAMAP" id="MF_00344">
    <property type="entry name" value="GMP_synthase"/>
    <property type="match status" value="1"/>
</dbReference>
<dbReference type="InterPro" id="IPR029062">
    <property type="entry name" value="Class_I_gatase-like"/>
</dbReference>
<dbReference type="InterPro" id="IPR017926">
    <property type="entry name" value="GATASE"/>
</dbReference>
<dbReference type="InterPro" id="IPR001674">
    <property type="entry name" value="GMP_synth_C"/>
</dbReference>
<dbReference type="InterPro" id="IPR004739">
    <property type="entry name" value="GMP_synth_GATase"/>
</dbReference>
<dbReference type="InterPro" id="IPR022955">
    <property type="entry name" value="GMP_synthase"/>
</dbReference>
<dbReference type="InterPro" id="IPR025777">
    <property type="entry name" value="GMPS_ATP_PPase_dom"/>
</dbReference>
<dbReference type="InterPro" id="IPR022310">
    <property type="entry name" value="NAD/GMP_synthase"/>
</dbReference>
<dbReference type="InterPro" id="IPR014729">
    <property type="entry name" value="Rossmann-like_a/b/a_fold"/>
</dbReference>
<dbReference type="NCBIfam" id="TIGR00884">
    <property type="entry name" value="guaA_Cterm"/>
    <property type="match status" value="1"/>
</dbReference>
<dbReference type="NCBIfam" id="TIGR00888">
    <property type="entry name" value="guaA_Nterm"/>
    <property type="match status" value="1"/>
</dbReference>
<dbReference type="NCBIfam" id="NF000848">
    <property type="entry name" value="PRK00074.1"/>
    <property type="match status" value="1"/>
</dbReference>
<dbReference type="PANTHER" id="PTHR11922:SF2">
    <property type="entry name" value="GMP SYNTHASE [GLUTAMINE-HYDROLYZING]"/>
    <property type="match status" value="1"/>
</dbReference>
<dbReference type="PANTHER" id="PTHR11922">
    <property type="entry name" value="GMP SYNTHASE-RELATED"/>
    <property type="match status" value="1"/>
</dbReference>
<dbReference type="Pfam" id="PF00117">
    <property type="entry name" value="GATase"/>
    <property type="match status" value="1"/>
</dbReference>
<dbReference type="Pfam" id="PF00958">
    <property type="entry name" value="GMP_synt_C"/>
    <property type="match status" value="1"/>
</dbReference>
<dbReference type="Pfam" id="PF02540">
    <property type="entry name" value="NAD_synthase"/>
    <property type="match status" value="1"/>
</dbReference>
<dbReference type="PRINTS" id="PR00097">
    <property type="entry name" value="ANTSNTHASEII"/>
</dbReference>
<dbReference type="PRINTS" id="PR00099">
    <property type="entry name" value="CPSGATASE"/>
</dbReference>
<dbReference type="PRINTS" id="PR00096">
    <property type="entry name" value="GATASE"/>
</dbReference>
<dbReference type="SUPFAM" id="SSF52402">
    <property type="entry name" value="Adenine nucleotide alpha hydrolases-like"/>
    <property type="match status" value="1"/>
</dbReference>
<dbReference type="SUPFAM" id="SSF52317">
    <property type="entry name" value="Class I glutamine amidotransferase-like"/>
    <property type="match status" value="1"/>
</dbReference>
<dbReference type="SUPFAM" id="SSF54810">
    <property type="entry name" value="GMP synthetase C-terminal dimerisation domain"/>
    <property type="match status" value="1"/>
</dbReference>
<dbReference type="PROSITE" id="PS51273">
    <property type="entry name" value="GATASE_TYPE_1"/>
    <property type="match status" value="1"/>
</dbReference>
<dbReference type="PROSITE" id="PS51553">
    <property type="entry name" value="GMPS_ATP_PPASE"/>
    <property type="match status" value="1"/>
</dbReference>
<evidence type="ECO:0000250" key="1"/>
<comment type="function">
    <text evidence="1">Catalyzes the synthesis of GMP from XMP.</text>
</comment>
<comment type="catalytic activity">
    <reaction>
        <text>XMP + L-glutamine + ATP + H2O = GMP + L-glutamate + AMP + diphosphate + 2 H(+)</text>
        <dbReference type="Rhea" id="RHEA:11680"/>
        <dbReference type="ChEBI" id="CHEBI:15377"/>
        <dbReference type="ChEBI" id="CHEBI:15378"/>
        <dbReference type="ChEBI" id="CHEBI:29985"/>
        <dbReference type="ChEBI" id="CHEBI:30616"/>
        <dbReference type="ChEBI" id="CHEBI:33019"/>
        <dbReference type="ChEBI" id="CHEBI:57464"/>
        <dbReference type="ChEBI" id="CHEBI:58115"/>
        <dbReference type="ChEBI" id="CHEBI:58359"/>
        <dbReference type="ChEBI" id="CHEBI:456215"/>
        <dbReference type="EC" id="6.3.5.2"/>
    </reaction>
</comment>
<comment type="pathway">
    <text>Purine metabolism; GMP biosynthesis; GMP from XMP (L-Gln route): step 1/1.</text>
</comment>
<comment type="subunit">
    <text evidence="1">Homodimer.</text>
</comment>
<organism>
    <name type="scientific">Xylella fastidiosa (strain 9a5c)</name>
    <dbReference type="NCBI Taxonomy" id="160492"/>
    <lineage>
        <taxon>Bacteria</taxon>
        <taxon>Pseudomonadati</taxon>
        <taxon>Pseudomonadota</taxon>
        <taxon>Gammaproteobacteria</taxon>
        <taxon>Lysobacterales</taxon>
        <taxon>Lysobacteraceae</taxon>
        <taxon>Xylella</taxon>
    </lineage>
</organism>
<feature type="chain" id="PRO_0000140212" description="GMP synthase [glutamine-hydrolyzing]">
    <location>
        <begin position="1"/>
        <end position="522"/>
    </location>
</feature>
<feature type="domain" description="Glutamine amidotransferase type-1">
    <location>
        <begin position="9"/>
        <end position="204"/>
    </location>
</feature>
<feature type="domain" description="GMPS ATP-PPase">
    <location>
        <begin position="205"/>
        <end position="397"/>
    </location>
</feature>
<feature type="active site" description="Nucleophile" evidence="1">
    <location>
        <position position="86"/>
    </location>
</feature>
<feature type="active site" evidence="1">
    <location>
        <position position="178"/>
    </location>
</feature>
<feature type="active site" evidence="1">
    <location>
        <position position="180"/>
    </location>
</feature>
<feature type="binding site" evidence="1">
    <location>
        <begin position="232"/>
        <end position="238"/>
    </location>
    <ligand>
        <name>ATP</name>
        <dbReference type="ChEBI" id="CHEBI:30616"/>
    </ligand>
</feature>
<sequence length="522" mass="57554">MTPNIHHDKILILDFGAQYTQLIARRIREIGVYCEVWPWDHSPEEILSFGAKGIILSGGPESTTSPGAPAAPQHVFDSDLPILGICYGMQTMAVHLGGATEAADKREFGHASVQVIYPDTLFSGLSDHPSEFRLDVWMSHGDHVSRVPPGFTITAATDRIPIAAMSREDKRWYGVQFHPEVTHTLQGQALLRRFVVDICGCQMLWTAANIIEDQIAHVRERVGCDEVILGLSGGVDSSVVAALLQKAIGSQLTCVFVDTGLLRWGEGDQVMAMFAEHMGVNVVRINAASRYFDALQGVYDPEAKRKIIGNLFIQIFEEEASKRKQAKWLAQGTIYPDVIESAGSKTGKAHVIKSHHNVGGLPEQMTLGMVEPLRELFKDEVRRLGVALGLPHAMVYRHPFPGPGLGVRILGEVKPEYAELLAKADAIFIDELHQADLYDKVSQAFAVFLPVKSVGVVGDARAYEWVIALRAVETVDFMTAQWAPLPYDFLSTVSNRIINELRGVSRVVYDISGKPPATIEWE</sequence>
<protein>
    <recommendedName>
        <fullName>GMP synthase [glutamine-hydrolyzing]</fullName>
        <ecNumber>6.3.5.2</ecNumber>
    </recommendedName>
    <alternativeName>
        <fullName>GMP synthetase</fullName>
    </alternativeName>
    <alternativeName>
        <fullName>Glutamine amidotransferase</fullName>
    </alternativeName>
</protein>
<keyword id="KW-0067">ATP-binding</keyword>
<keyword id="KW-0315">Glutamine amidotransferase</keyword>
<keyword id="KW-0332">GMP biosynthesis</keyword>
<keyword id="KW-0436">Ligase</keyword>
<keyword id="KW-0547">Nucleotide-binding</keyword>
<keyword id="KW-0658">Purine biosynthesis</keyword>
<proteinExistence type="inferred from homology"/>
<accession>Q9PAR6</accession>
<name>GUAA_XYLFA</name>
<gene>
    <name type="primary">guaA</name>
    <name type="ordered locus">XF_2429</name>
</gene>